<keyword id="KW-0025">Alternative splicing</keyword>
<keyword id="KW-0344">Guanine-nucleotide releasing factor</keyword>
<keyword id="KW-0597">Phosphoprotein</keyword>
<keyword id="KW-1267">Proteomics identification</keyword>
<keyword id="KW-1185">Reference proteome</keyword>
<keyword id="KW-0677">Repeat</keyword>
<keyword id="KW-0728">SH3 domain</keyword>
<comment type="function">
    <text evidence="1">May act as a guanine-nucleotide releasing factor.</text>
</comment>
<comment type="interaction">
    <interactant intactId="EBI-18172597">
        <id>Q9NXL2-1</id>
    </interactant>
    <interactant intactId="EBI-25837549">
        <id>P28329-3</id>
        <label>CHAT</label>
    </interactant>
    <organismsDiffer>false</organismsDiffer>
    <experiments>3</experiments>
</comment>
<comment type="interaction">
    <interactant intactId="EBI-18172597">
        <id>Q9NXL2-1</id>
    </interactant>
    <interactant intactId="EBI-10976677">
        <id>G5E9A7</id>
        <label>DMWD</label>
    </interactant>
    <organismsDiffer>false</organismsDiffer>
    <experiments>3</experiments>
</comment>
<comment type="interaction">
    <interactant intactId="EBI-18172597">
        <id>Q9NXL2-1</id>
    </interactant>
    <interactant intactId="EBI-348399">
        <id>P22607</id>
        <label>FGFR3</label>
    </interactant>
    <organismsDiffer>false</organismsDiffer>
    <experiments>3</experiments>
</comment>
<comment type="interaction">
    <interactant intactId="EBI-18172597">
        <id>Q9NXL2-1</id>
    </interactant>
    <interactant intactId="EBI-351506">
        <id>P06396</id>
        <label>GSN</label>
    </interactant>
    <organismsDiffer>false</organismsDiffer>
    <experiments>3</experiments>
</comment>
<comment type="interaction">
    <interactant intactId="EBI-18172597">
        <id>Q9NXL2-1</id>
    </interactant>
    <interactant intactId="EBI-350145">
        <id>P01112</id>
        <label>HRAS</label>
    </interactant>
    <organismsDiffer>false</organismsDiffer>
    <experiments>3</experiments>
</comment>
<comment type="interaction">
    <interactant intactId="EBI-18172597">
        <id>Q9NXL2-1</id>
    </interactant>
    <interactant intactId="EBI-12004298">
        <id>O75971-2</id>
        <label>SNAPC5</label>
    </interactant>
    <organismsDiffer>false</organismsDiffer>
    <experiments>3</experiments>
</comment>
<comment type="interaction">
    <interactant intactId="EBI-18172597">
        <id>Q9NXL2-1</id>
    </interactant>
    <interactant intactId="EBI-5235340">
        <id>Q7Z699</id>
        <label>SPRED1</label>
    </interactant>
    <organismsDiffer>false</organismsDiffer>
    <experiments>3</experiments>
</comment>
<comment type="interaction">
    <interactant intactId="EBI-18172597">
        <id>Q9NXL2-1</id>
    </interactant>
    <interactant intactId="EBI-25900580">
        <id>Q9Y649</id>
    </interactant>
    <organismsDiffer>false</organismsDiffer>
    <experiments>3</experiments>
</comment>
<comment type="alternative products">
    <event type="alternative splicing"/>
    <isoform>
        <id>Q9NXL2-2</id>
        <name>2</name>
        <sequence type="displayed"/>
    </isoform>
    <isoform>
        <id>Q9NXL2-1</id>
        <name>1</name>
        <sequence type="described" ref="VSP_053830"/>
    </isoform>
</comment>
<sequence length="777" mass="89078">MEPKEATGKENMVTKKKNLAFLRSRLYMLERRKTDTVVESSVSGDHSGTLRRSQSDRTEYNQKLQEKMTPQGECSVAETLTPEEEHHMKRMMAKREKIIKELIQTEKDYLNDLELCVREVVQPLRNKKTDRLDVDSLFSNIESVHQISAKLLSLLEEATTDVEPAMQVIGEVFLQIKGPLEDIYKIYCYHHDEAHSILESYEKEEELKEHLSHCIQSLKKIYMQEGKPNLLDMGSLMIKPIQRVMKYPLLLCELRNSTPPSHPDYRALDDAFAAVKDINVNINELKRRKDLVLKYKKNDEDESLKDKLSKLNIHSISKKSKRVTNHLKILTRGESQVKDNTFNREEKLFRALEKTVRLCVKNISLCLQHIQDAMPLALQSVMDLQEISYNKDDEMDYSETLSNALNSCHDFASHLQRLILTPLSALLSLFPGPHKLIQKRYDKLLDCNSYLQRSTGEESDLAKKEYEALNAQLVEELQAFNQAARKILLNCLCSFITLLRDLMLVAQQAYSTLVPMPLLVSSISEIQNQVLEEIQNLNCVKENSATFIERKLSFEKKKPVQILPEMPHQTDIHRSKLLSTYSAEELYQAKRKCNATQEYDINLLEGDLVAVIEQKDPLGSTSRWLVDTGNVKGYVYSSFLKPYNPAKMQKVDAENRFCDDDFENISLFVSSRPASDSVTGTSESSIGDSSSSLSGTCGKFETNGTDVDSFQEVDEQIFYAVHAFQARSDHELSLQEYQRVHILRFCDLSGNKEWWLAEAQGQKGYVPANYLGKMTYA</sequence>
<protein>
    <recommendedName>
        <fullName>Rho guanine nucleotide exchange factor 38</fullName>
    </recommendedName>
</protein>
<evidence type="ECO:0000250" key="1"/>
<evidence type="ECO:0000250" key="2">
    <source>
        <dbReference type="UniProtKB" id="Q80VK6"/>
    </source>
</evidence>
<evidence type="ECO:0000255" key="3">
    <source>
        <dbReference type="PROSITE-ProRule" id="PRU00062"/>
    </source>
</evidence>
<evidence type="ECO:0000255" key="4">
    <source>
        <dbReference type="PROSITE-ProRule" id="PRU00192"/>
    </source>
</evidence>
<evidence type="ECO:0000255" key="5">
    <source>
        <dbReference type="PROSITE-ProRule" id="PRU00361"/>
    </source>
</evidence>
<evidence type="ECO:0000256" key="6">
    <source>
        <dbReference type="SAM" id="MobiDB-lite"/>
    </source>
</evidence>
<evidence type="ECO:0000269" key="7">
    <source>
    </source>
</evidence>
<evidence type="ECO:0000303" key="8">
    <source>
    </source>
</evidence>
<organism>
    <name type="scientific">Homo sapiens</name>
    <name type="common">Human</name>
    <dbReference type="NCBI Taxonomy" id="9606"/>
    <lineage>
        <taxon>Eukaryota</taxon>
        <taxon>Metazoa</taxon>
        <taxon>Chordata</taxon>
        <taxon>Craniata</taxon>
        <taxon>Vertebrata</taxon>
        <taxon>Euteleostomi</taxon>
        <taxon>Mammalia</taxon>
        <taxon>Eutheria</taxon>
        <taxon>Euarchontoglires</taxon>
        <taxon>Primates</taxon>
        <taxon>Haplorrhini</taxon>
        <taxon>Catarrhini</taxon>
        <taxon>Hominidae</taxon>
        <taxon>Homo</taxon>
    </lineage>
</organism>
<feature type="chain" id="PRO_0000318987" description="Rho guanine nucleotide exchange factor 38">
    <location>
        <begin position="1"/>
        <end position="777"/>
    </location>
</feature>
<feature type="domain" description="DH" evidence="3">
    <location>
        <begin position="94"/>
        <end position="285"/>
    </location>
</feature>
<feature type="domain" description="BAR" evidence="5">
    <location>
        <begin position="327"/>
        <end position="536"/>
    </location>
</feature>
<feature type="domain" description="SH3 1" evidence="4">
    <location>
        <begin position="582"/>
        <end position="645"/>
    </location>
</feature>
<feature type="domain" description="SH3 2" evidence="4">
    <location>
        <begin position="713"/>
        <end position="776"/>
    </location>
</feature>
<feature type="region of interest" description="Disordered" evidence="6">
    <location>
        <begin position="35"/>
        <end position="72"/>
    </location>
</feature>
<feature type="region of interest" description="Disordered" evidence="6">
    <location>
        <begin position="673"/>
        <end position="694"/>
    </location>
</feature>
<feature type="compositionally biased region" description="Polar residues" evidence="6">
    <location>
        <begin position="37"/>
        <end position="52"/>
    </location>
</feature>
<feature type="compositionally biased region" description="Basic and acidic residues" evidence="6">
    <location>
        <begin position="53"/>
        <end position="66"/>
    </location>
</feature>
<feature type="compositionally biased region" description="Low complexity" evidence="6">
    <location>
        <begin position="679"/>
        <end position="694"/>
    </location>
</feature>
<feature type="modified residue" description="Phosphothreonine" evidence="2">
    <location>
        <position position="34"/>
    </location>
</feature>
<feature type="splice variant" id="VSP_053830" description="In isoform 1." evidence="8">
    <location>
        <begin position="220"/>
        <end position="777"/>
    </location>
</feature>
<feature type="sequence variant" id="VAR_038928" description="In a breast cancer sample; somatic mutation." evidence="7">
    <original>K</original>
    <variation>N</variation>
    <location>
        <position position="67"/>
    </location>
</feature>
<feature type="sequence variant" id="VAR_038929" description="In dbSNP:rs2276970.">
    <original>M</original>
    <variation>V</variation>
    <location>
        <position position="88"/>
    </location>
</feature>
<gene>
    <name type="primary">ARHGEF38</name>
</gene>
<name>ARH38_HUMAN</name>
<dbReference type="EMBL" id="AK000191">
    <property type="protein sequence ID" value="BAA90998.1"/>
    <property type="molecule type" value="mRNA"/>
</dbReference>
<dbReference type="EMBL" id="AC004066">
    <property type="status" value="NOT_ANNOTATED_CDS"/>
    <property type="molecule type" value="Genomic_DNA"/>
</dbReference>
<dbReference type="EMBL" id="AC105391">
    <property type="status" value="NOT_ANNOTATED_CDS"/>
    <property type="molecule type" value="Genomic_DNA"/>
</dbReference>
<dbReference type="EMBL" id="CH471057">
    <property type="protein sequence ID" value="EAX06187.1"/>
    <property type="molecule type" value="Genomic_DNA"/>
</dbReference>
<dbReference type="EMBL" id="BC105695">
    <property type="protein sequence ID" value="AAI05696.1"/>
    <property type="molecule type" value="mRNA"/>
</dbReference>
<dbReference type="CCDS" id="CCDS3670.1">
    <molecule id="Q9NXL2-1"/>
</dbReference>
<dbReference type="CCDS" id="CCDS56338.1">
    <molecule id="Q9NXL2-2"/>
</dbReference>
<dbReference type="RefSeq" id="NP_001229658.1">
    <molecule id="Q9NXL2-2"/>
    <property type="nucleotide sequence ID" value="NM_001242729.2"/>
</dbReference>
<dbReference type="RefSeq" id="NP_060170.1">
    <molecule id="Q9NXL2-1"/>
    <property type="nucleotide sequence ID" value="NM_017700.2"/>
</dbReference>
<dbReference type="SMR" id="Q9NXL2"/>
<dbReference type="BioGRID" id="120198">
    <property type="interactions" value="5"/>
</dbReference>
<dbReference type="FunCoup" id="Q9NXL2">
    <property type="interactions" value="449"/>
</dbReference>
<dbReference type="IntAct" id="Q9NXL2">
    <property type="interactions" value="11"/>
</dbReference>
<dbReference type="STRING" id="9606.ENSP00000416125"/>
<dbReference type="iPTMnet" id="Q9NXL2"/>
<dbReference type="PhosphoSitePlus" id="Q9NXL2"/>
<dbReference type="BioMuta" id="ARHGEF38"/>
<dbReference type="DMDM" id="74725339"/>
<dbReference type="jPOST" id="Q9NXL2"/>
<dbReference type="MassIVE" id="Q9NXL2"/>
<dbReference type="PaxDb" id="9606-ENSP00000416125"/>
<dbReference type="PeptideAtlas" id="Q9NXL2"/>
<dbReference type="ProteomicsDB" id="10314"/>
<dbReference type="ProteomicsDB" id="83109">
    <molecule id="Q9NXL2-2"/>
</dbReference>
<dbReference type="Antibodypedia" id="50147">
    <property type="antibodies" value="11 antibodies from 6 providers"/>
</dbReference>
<dbReference type="DNASU" id="54848"/>
<dbReference type="Ensembl" id="ENST00000265154.6">
    <molecule id="Q9NXL2-1"/>
    <property type="protein sequence ID" value="ENSP00000265154.2"/>
    <property type="gene ID" value="ENSG00000236699.9"/>
</dbReference>
<dbReference type="Ensembl" id="ENST00000420470.3">
    <molecule id="Q9NXL2-2"/>
    <property type="protein sequence ID" value="ENSP00000416125.2"/>
    <property type="gene ID" value="ENSG00000236699.9"/>
</dbReference>
<dbReference type="GeneID" id="54848"/>
<dbReference type="KEGG" id="hsa:54848"/>
<dbReference type="MANE-Select" id="ENST00000420470.3">
    <property type="protein sequence ID" value="ENSP00000416125.2"/>
    <property type="RefSeq nucleotide sequence ID" value="NM_001242729.2"/>
    <property type="RefSeq protein sequence ID" value="NP_001229658.1"/>
</dbReference>
<dbReference type="UCSC" id="uc003hxu.3">
    <molecule id="Q9NXL2-2"/>
    <property type="organism name" value="human"/>
</dbReference>
<dbReference type="AGR" id="HGNC:25968"/>
<dbReference type="CTD" id="54848"/>
<dbReference type="DisGeNET" id="54848"/>
<dbReference type="GeneCards" id="ARHGEF38"/>
<dbReference type="HGNC" id="HGNC:25968">
    <property type="gene designation" value="ARHGEF38"/>
</dbReference>
<dbReference type="HPA" id="ENSG00000236699">
    <property type="expression patterns" value="Tissue enhanced (breast, pancreas)"/>
</dbReference>
<dbReference type="MalaCards" id="ARHGEF38"/>
<dbReference type="MIM" id="619919">
    <property type="type" value="gene"/>
</dbReference>
<dbReference type="neXtProt" id="NX_Q9NXL2"/>
<dbReference type="OpenTargets" id="ENSG00000236699"/>
<dbReference type="Orphanet" id="199306">
    <property type="disease" value="Cleft lip/palate"/>
</dbReference>
<dbReference type="PharmGKB" id="PA165663186"/>
<dbReference type="VEuPathDB" id="HostDB:ENSG00000236699"/>
<dbReference type="eggNOG" id="KOG3519">
    <property type="taxonomic scope" value="Eukaryota"/>
</dbReference>
<dbReference type="GeneTree" id="ENSGT00950000183088"/>
<dbReference type="HOGENOM" id="CLU_107855_1_0_1"/>
<dbReference type="InParanoid" id="Q9NXL2"/>
<dbReference type="OMA" id="NVQCYLQ"/>
<dbReference type="OrthoDB" id="6244550at2759"/>
<dbReference type="PAN-GO" id="Q9NXL2">
    <property type="GO annotations" value="0 GO annotations based on evolutionary models"/>
</dbReference>
<dbReference type="PhylomeDB" id="Q9NXL2"/>
<dbReference type="TreeFam" id="TF317245"/>
<dbReference type="PathwayCommons" id="Q9NXL2"/>
<dbReference type="Reactome" id="R-HSA-193648">
    <property type="pathway name" value="NRAGE signals death through JNK"/>
</dbReference>
<dbReference type="Reactome" id="R-HSA-416482">
    <property type="pathway name" value="G alpha (12/13) signalling events"/>
</dbReference>
<dbReference type="SignaLink" id="Q9NXL2"/>
<dbReference type="BioGRID-ORCS" id="54848">
    <property type="hits" value="26 hits in 1144 CRISPR screens"/>
</dbReference>
<dbReference type="ChiTaRS" id="ARHGEF38">
    <property type="organism name" value="human"/>
</dbReference>
<dbReference type="GenomeRNAi" id="54848"/>
<dbReference type="Pharos" id="Q9NXL2">
    <property type="development level" value="Tdark"/>
</dbReference>
<dbReference type="PRO" id="PR:Q9NXL2"/>
<dbReference type="Proteomes" id="UP000005640">
    <property type="component" value="Chromosome 4"/>
</dbReference>
<dbReference type="RNAct" id="Q9NXL2">
    <property type="molecule type" value="protein"/>
</dbReference>
<dbReference type="Bgee" id="ENSG00000236699">
    <property type="expression patterns" value="Expressed in body of pancreas and 101 other cell types or tissues"/>
</dbReference>
<dbReference type="GO" id="GO:0005737">
    <property type="term" value="C:cytoplasm"/>
    <property type="evidence" value="ECO:0000318"/>
    <property type="project" value="GO_Central"/>
</dbReference>
<dbReference type="GO" id="GO:0005085">
    <property type="term" value="F:guanyl-nucleotide exchange factor activity"/>
    <property type="evidence" value="ECO:0000318"/>
    <property type="project" value="GO_Central"/>
</dbReference>
<dbReference type="CDD" id="cd07589">
    <property type="entry name" value="BAR_DNMBP"/>
    <property type="match status" value="1"/>
</dbReference>
<dbReference type="CDD" id="cd00160">
    <property type="entry name" value="RhoGEF"/>
    <property type="match status" value="1"/>
</dbReference>
<dbReference type="CDD" id="cd12141">
    <property type="entry name" value="SH3_DNMBP_C2"/>
    <property type="match status" value="1"/>
</dbReference>
<dbReference type="FunFam" id="2.30.30.40:FF:000066">
    <property type="entry name" value="dynamin-binding protein isoform X1"/>
    <property type="match status" value="1"/>
</dbReference>
<dbReference type="FunFam" id="1.20.1270.60:FF:000061">
    <property type="entry name" value="Rho guanine nucleotide exchange factor 38"/>
    <property type="match status" value="1"/>
</dbReference>
<dbReference type="FunFam" id="2.30.30.40:FF:000193">
    <property type="entry name" value="Rho guanine nucleotide exchange factor 38"/>
    <property type="match status" value="1"/>
</dbReference>
<dbReference type="FunFam" id="1.20.900.10:FF:000032">
    <property type="entry name" value="rho guanine nucleotide exchange factor 38"/>
    <property type="match status" value="1"/>
</dbReference>
<dbReference type="Gene3D" id="1.20.1270.60">
    <property type="entry name" value="Arfaptin homology (AH) domain/BAR domain"/>
    <property type="match status" value="1"/>
</dbReference>
<dbReference type="Gene3D" id="1.20.900.10">
    <property type="entry name" value="Dbl homology (DH) domain"/>
    <property type="match status" value="1"/>
</dbReference>
<dbReference type="Gene3D" id="2.30.30.40">
    <property type="entry name" value="SH3 Domains"/>
    <property type="match status" value="2"/>
</dbReference>
<dbReference type="InterPro" id="IPR027267">
    <property type="entry name" value="AH/BAR_dom_sf"/>
</dbReference>
<dbReference type="InterPro" id="IPR004148">
    <property type="entry name" value="BAR_dom"/>
</dbReference>
<dbReference type="InterPro" id="IPR035899">
    <property type="entry name" value="DBL_dom_sf"/>
</dbReference>
<dbReference type="InterPro" id="IPR000219">
    <property type="entry name" value="DH_dom"/>
</dbReference>
<dbReference type="InterPro" id="IPR051492">
    <property type="entry name" value="Dynamin-Rho_GEF"/>
</dbReference>
<dbReference type="InterPro" id="IPR036028">
    <property type="entry name" value="SH3-like_dom_sf"/>
</dbReference>
<dbReference type="InterPro" id="IPR001452">
    <property type="entry name" value="SH3_domain"/>
</dbReference>
<dbReference type="PANTHER" id="PTHR22834">
    <property type="entry name" value="NUCLEAR FUSION PROTEIN FUS2"/>
    <property type="match status" value="1"/>
</dbReference>
<dbReference type="PANTHER" id="PTHR22834:SF17">
    <property type="entry name" value="RHO GUANINE NUCLEOTIDE EXCHANGE FACTOR 38"/>
    <property type="match status" value="1"/>
</dbReference>
<dbReference type="Pfam" id="PF03114">
    <property type="entry name" value="BAR"/>
    <property type="match status" value="1"/>
</dbReference>
<dbReference type="Pfam" id="PF00621">
    <property type="entry name" value="RhoGEF"/>
    <property type="match status" value="1"/>
</dbReference>
<dbReference type="Pfam" id="PF07653">
    <property type="entry name" value="SH3_2"/>
    <property type="match status" value="1"/>
</dbReference>
<dbReference type="Pfam" id="PF14604">
    <property type="entry name" value="SH3_9"/>
    <property type="match status" value="1"/>
</dbReference>
<dbReference type="SMART" id="SM00721">
    <property type="entry name" value="BAR"/>
    <property type="match status" value="1"/>
</dbReference>
<dbReference type="SMART" id="SM00325">
    <property type="entry name" value="RhoGEF"/>
    <property type="match status" value="1"/>
</dbReference>
<dbReference type="SMART" id="SM00326">
    <property type="entry name" value="SH3"/>
    <property type="match status" value="2"/>
</dbReference>
<dbReference type="SUPFAM" id="SSF103657">
    <property type="entry name" value="BAR/IMD domain-like"/>
    <property type="match status" value="1"/>
</dbReference>
<dbReference type="SUPFAM" id="SSF48065">
    <property type="entry name" value="DBL homology domain (DH-domain)"/>
    <property type="match status" value="1"/>
</dbReference>
<dbReference type="SUPFAM" id="SSF50044">
    <property type="entry name" value="SH3-domain"/>
    <property type="match status" value="2"/>
</dbReference>
<dbReference type="PROSITE" id="PS51021">
    <property type="entry name" value="BAR"/>
    <property type="match status" value="1"/>
</dbReference>
<dbReference type="PROSITE" id="PS50010">
    <property type="entry name" value="DH_2"/>
    <property type="match status" value="1"/>
</dbReference>
<dbReference type="PROSITE" id="PS50002">
    <property type="entry name" value="SH3"/>
    <property type="match status" value="2"/>
</dbReference>
<accession>Q9NXL2</accession>
<accession>C9JIB4</accession>
<proteinExistence type="evidence at protein level"/>
<reference key="1">
    <citation type="journal article" date="2004" name="Nat. Genet.">
        <title>Complete sequencing and characterization of 21,243 full-length human cDNAs.</title>
        <authorList>
            <person name="Ota T."/>
            <person name="Suzuki Y."/>
            <person name="Nishikawa T."/>
            <person name="Otsuki T."/>
            <person name="Sugiyama T."/>
            <person name="Irie R."/>
            <person name="Wakamatsu A."/>
            <person name="Hayashi K."/>
            <person name="Sato H."/>
            <person name="Nagai K."/>
            <person name="Kimura K."/>
            <person name="Makita H."/>
            <person name="Sekine M."/>
            <person name="Obayashi M."/>
            <person name="Nishi T."/>
            <person name="Shibahara T."/>
            <person name="Tanaka T."/>
            <person name="Ishii S."/>
            <person name="Yamamoto J."/>
            <person name="Saito K."/>
            <person name="Kawai Y."/>
            <person name="Isono Y."/>
            <person name="Nakamura Y."/>
            <person name="Nagahari K."/>
            <person name="Murakami K."/>
            <person name="Yasuda T."/>
            <person name="Iwayanagi T."/>
            <person name="Wagatsuma M."/>
            <person name="Shiratori A."/>
            <person name="Sudo H."/>
            <person name="Hosoiri T."/>
            <person name="Kaku Y."/>
            <person name="Kodaira H."/>
            <person name="Kondo H."/>
            <person name="Sugawara M."/>
            <person name="Takahashi M."/>
            <person name="Kanda K."/>
            <person name="Yokoi T."/>
            <person name="Furuya T."/>
            <person name="Kikkawa E."/>
            <person name="Omura Y."/>
            <person name="Abe K."/>
            <person name="Kamihara K."/>
            <person name="Katsuta N."/>
            <person name="Sato K."/>
            <person name="Tanikawa M."/>
            <person name="Yamazaki M."/>
            <person name="Ninomiya K."/>
            <person name="Ishibashi T."/>
            <person name="Yamashita H."/>
            <person name="Murakawa K."/>
            <person name="Fujimori K."/>
            <person name="Tanai H."/>
            <person name="Kimata M."/>
            <person name="Watanabe M."/>
            <person name="Hiraoka S."/>
            <person name="Chiba Y."/>
            <person name="Ishida S."/>
            <person name="Ono Y."/>
            <person name="Takiguchi S."/>
            <person name="Watanabe S."/>
            <person name="Yosida M."/>
            <person name="Hotuta T."/>
            <person name="Kusano J."/>
            <person name="Kanehori K."/>
            <person name="Takahashi-Fujii A."/>
            <person name="Hara H."/>
            <person name="Tanase T.-O."/>
            <person name="Nomura Y."/>
            <person name="Togiya S."/>
            <person name="Komai F."/>
            <person name="Hara R."/>
            <person name="Takeuchi K."/>
            <person name="Arita M."/>
            <person name="Imose N."/>
            <person name="Musashino K."/>
            <person name="Yuuki H."/>
            <person name="Oshima A."/>
            <person name="Sasaki N."/>
            <person name="Aotsuka S."/>
            <person name="Yoshikawa Y."/>
            <person name="Matsunawa H."/>
            <person name="Ichihara T."/>
            <person name="Shiohata N."/>
            <person name="Sano S."/>
            <person name="Moriya S."/>
            <person name="Momiyama H."/>
            <person name="Satoh N."/>
            <person name="Takami S."/>
            <person name="Terashima Y."/>
            <person name="Suzuki O."/>
            <person name="Nakagawa S."/>
            <person name="Senoh A."/>
            <person name="Mizoguchi H."/>
            <person name="Goto Y."/>
            <person name="Shimizu F."/>
            <person name="Wakebe H."/>
            <person name="Hishigaki H."/>
            <person name="Watanabe T."/>
            <person name="Sugiyama A."/>
            <person name="Takemoto M."/>
            <person name="Kawakami B."/>
            <person name="Yamazaki M."/>
            <person name="Watanabe K."/>
            <person name="Kumagai A."/>
            <person name="Itakura S."/>
            <person name="Fukuzumi Y."/>
            <person name="Fujimori Y."/>
            <person name="Komiyama M."/>
            <person name="Tashiro H."/>
            <person name="Tanigami A."/>
            <person name="Fujiwara T."/>
            <person name="Ono T."/>
            <person name="Yamada K."/>
            <person name="Fujii Y."/>
            <person name="Ozaki K."/>
            <person name="Hirao M."/>
            <person name="Ohmori Y."/>
            <person name="Kawabata A."/>
            <person name="Hikiji T."/>
            <person name="Kobatake N."/>
            <person name="Inagaki H."/>
            <person name="Ikema Y."/>
            <person name="Okamoto S."/>
            <person name="Okitani R."/>
            <person name="Kawakami T."/>
            <person name="Noguchi S."/>
            <person name="Itoh T."/>
            <person name="Shigeta K."/>
            <person name="Senba T."/>
            <person name="Matsumura K."/>
            <person name="Nakajima Y."/>
            <person name="Mizuno T."/>
            <person name="Morinaga M."/>
            <person name="Sasaki M."/>
            <person name="Togashi T."/>
            <person name="Oyama M."/>
            <person name="Hata H."/>
            <person name="Watanabe M."/>
            <person name="Komatsu T."/>
            <person name="Mizushima-Sugano J."/>
            <person name="Satoh T."/>
            <person name="Shirai Y."/>
            <person name="Takahashi Y."/>
            <person name="Nakagawa K."/>
            <person name="Okumura K."/>
            <person name="Nagase T."/>
            <person name="Nomura N."/>
            <person name="Kikuchi H."/>
            <person name="Masuho Y."/>
            <person name="Yamashita R."/>
            <person name="Nakai K."/>
            <person name="Yada T."/>
            <person name="Nakamura Y."/>
            <person name="Ohara O."/>
            <person name="Isogai T."/>
            <person name="Sugano S."/>
        </authorList>
    </citation>
    <scope>NUCLEOTIDE SEQUENCE [LARGE SCALE MRNA] (ISOFORM 1)</scope>
    <source>
        <tissue>Colon mucosa</tissue>
    </source>
</reference>
<reference key="2">
    <citation type="journal article" date="2005" name="Nature">
        <title>Generation and annotation of the DNA sequences of human chromosomes 2 and 4.</title>
        <authorList>
            <person name="Hillier L.W."/>
            <person name="Graves T.A."/>
            <person name="Fulton R.S."/>
            <person name="Fulton L.A."/>
            <person name="Pepin K.H."/>
            <person name="Minx P."/>
            <person name="Wagner-McPherson C."/>
            <person name="Layman D."/>
            <person name="Wylie K."/>
            <person name="Sekhon M."/>
            <person name="Becker M.C."/>
            <person name="Fewell G.A."/>
            <person name="Delehaunty K.D."/>
            <person name="Miner T.L."/>
            <person name="Nash W.E."/>
            <person name="Kremitzki C."/>
            <person name="Oddy L."/>
            <person name="Du H."/>
            <person name="Sun H."/>
            <person name="Bradshaw-Cordum H."/>
            <person name="Ali J."/>
            <person name="Carter J."/>
            <person name="Cordes M."/>
            <person name="Harris A."/>
            <person name="Isak A."/>
            <person name="van Brunt A."/>
            <person name="Nguyen C."/>
            <person name="Du F."/>
            <person name="Courtney L."/>
            <person name="Kalicki J."/>
            <person name="Ozersky P."/>
            <person name="Abbott S."/>
            <person name="Armstrong J."/>
            <person name="Belter E.A."/>
            <person name="Caruso L."/>
            <person name="Cedroni M."/>
            <person name="Cotton M."/>
            <person name="Davidson T."/>
            <person name="Desai A."/>
            <person name="Elliott G."/>
            <person name="Erb T."/>
            <person name="Fronick C."/>
            <person name="Gaige T."/>
            <person name="Haakenson W."/>
            <person name="Haglund K."/>
            <person name="Holmes A."/>
            <person name="Harkins R."/>
            <person name="Kim K."/>
            <person name="Kruchowski S.S."/>
            <person name="Strong C.M."/>
            <person name="Grewal N."/>
            <person name="Goyea E."/>
            <person name="Hou S."/>
            <person name="Levy A."/>
            <person name="Martinka S."/>
            <person name="Mead K."/>
            <person name="McLellan M.D."/>
            <person name="Meyer R."/>
            <person name="Randall-Maher J."/>
            <person name="Tomlinson C."/>
            <person name="Dauphin-Kohlberg S."/>
            <person name="Kozlowicz-Reilly A."/>
            <person name="Shah N."/>
            <person name="Swearengen-Shahid S."/>
            <person name="Snider J."/>
            <person name="Strong J.T."/>
            <person name="Thompson J."/>
            <person name="Yoakum M."/>
            <person name="Leonard S."/>
            <person name="Pearman C."/>
            <person name="Trani L."/>
            <person name="Radionenko M."/>
            <person name="Waligorski J.E."/>
            <person name="Wang C."/>
            <person name="Rock S.M."/>
            <person name="Tin-Wollam A.-M."/>
            <person name="Maupin R."/>
            <person name="Latreille P."/>
            <person name="Wendl M.C."/>
            <person name="Yang S.-P."/>
            <person name="Pohl C."/>
            <person name="Wallis J.W."/>
            <person name="Spieth J."/>
            <person name="Bieri T.A."/>
            <person name="Berkowicz N."/>
            <person name="Nelson J.O."/>
            <person name="Osborne J."/>
            <person name="Ding L."/>
            <person name="Meyer R."/>
            <person name="Sabo A."/>
            <person name="Shotland Y."/>
            <person name="Sinha P."/>
            <person name="Wohldmann P.E."/>
            <person name="Cook L.L."/>
            <person name="Hickenbotham M.T."/>
            <person name="Eldred J."/>
            <person name="Williams D."/>
            <person name="Jones T.A."/>
            <person name="She X."/>
            <person name="Ciccarelli F.D."/>
            <person name="Izaurralde E."/>
            <person name="Taylor J."/>
            <person name="Schmutz J."/>
            <person name="Myers R.M."/>
            <person name="Cox D.R."/>
            <person name="Huang X."/>
            <person name="McPherson J.D."/>
            <person name="Mardis E.R."/>
            <person name="Clifton S.W."/>
            <person name="Warren W.C."/>
            <person name="Chinwalla A.T."/>
            <person name="Eddy S.R."/>
            <person name="Marra M.A."/>
            <person name="Ovcharenko I."/>
            <person name="Furey T.S."/>
            <person name="Miller W."/>
            <person name="Eichler E.E."/>
            <person name="Bork P."/>
            <person name="Suyama M."/>
            <person name="Torrents D."/>
            <person name="Waterston R.H."/>
            <person name="Wilson R.K."/>
        </authorList>
    </citation>
    <scope>NUCLEOTIDE SEQUENCE [LARGE SCALE GENOMIC DNA]</scope>
</reference>
<reference key="3">
    <citation type="submission" date="2005-07" db="EMBL/GenBank/DDBJ databases">
        <authorList>
            <person name="Mural R.J."/>
            <person name="Istrail S."/>
            <person name="Sutton G.G."/>
            <person name="Florea L."/>
            <person name="Halpern A.L."/>
            <person name="Mobarry C.M."/>
            <person name="Lippert R."/>
            <person name="Walenz B."/>
            <person name="Shatkay H."/>
            <person name="Dew I."/>
            <person name="Miller J.R."/>
            <person name="Flanigan M.J."/>
            <person name="Edwards N.J."/>
            <person name="Bolanos R."/>
            <person name="Fasulo D."/>
            <person name="Halldorsson B.V."/>
            <person name="Hannenhalli S."/>
            <person name="Turner R."/>
            <person name="Yooseph S."/>
            <person name="Lu F."/>
            <person name="Nusskern D.R."/>
            <person name="Shue B.C."/>
            <person name="Zheng X.H."/>
            <person name="Zhong F."/>
            <person name="Delcher A.L."/>
            <person name="Huson D.H."/>
            <person name="Kravitz S.A."/>
            <person name="Mouchard L."/>
            <person name="Reinert K."/>
            <person name="Remington K.A."/>
            <person name="Clark A.G."/>
            <person name="Waterman M.S."/>
            <person name="Eichler E.E."/>
            <person name="Adams M.D."/>
            <person name="Hunkapiller M.W."/>
            <person name="Myers E.W."/>
            <person name="Venter J.C."/>
        </authorList>
    </citation>
    <scope>NUCLEOTIDE SEQUENCE [LARGE SCALE GENOMIC DNA]</scope>
</reference>
<reference key="4">
    <citation type="journal article" date="2004" name="Genome Res.">
        <title>The status, quality, and expansion of the NIH full-length cDNA project: the Mammalian Gene Collection (MGC).</title>
        <authorList>
            <consortium name="The MGC Project Team"/>
        </authorList>
    </citation>
    <scope>NUCLEOTIDE SEQUENCE [LARGE SCALE MRNA]</scope>
</reference>
<reference key="5">
    <citation type="journal article" date="2006" name="Science">
        <title>The consensus coding sequences of human breast and colorectal cancers.</title>
        <authorList>
            <person name="Sjoeblom T."/>
            <person name="Jones S."/>
            <person name="Wood L.D."/>
            <person name="Parsons D.W."/>
            <person name="Lin J."/>
            <person name="Barber T.D."/>
            <person name="Mandelker D."/>
            <person name="Leary R.J."/>
            <person name="Ptak J."/>
            <person name="Silliman N."/>
            <person name="Szabo S."/>
            <person name="Buckhaults P."/>
            <person name="Farrell C."/>
            <person name="Meeh P."/>
            <person name="Markowitz S.D."/>
            <person name="Willis J."/>
            <person name="Dawson D."/>
            <person name="Willson J.K.V."/>
            <person name="Gazdar A.F."/>
            <person name="Hartigan J."/>
            <person name="Wu L."/>
            <person name="Liu C."/>
            <person name="Parmigiani G."/>
            <person name="Park B.H."/>
            <person name="Bachman K.E."/>
            <person name="Papadopoulos N."/>
            <person name="Vogelstein B."/>
            <person name="Kinzler K.W."/>
            <person name="Velculescu V.E."/>
        </authorList>
    </citation>
    <scope>VARIANT [LARGE SCALE ANALYSIS] ASN-67</scope>
</reference>